<protein>
    <recommendedName>
        <fullName evidence="1">dCTP deaminase, dUMP-forming</fullName>
        <ecNumber evidence="1">3.5.4.30</ecNumber>
    </recommendedName>
    <alternativeName>
        <fullName evidence="1">Bifunctional dCTP deaminase:dUTPase</fullName>
    </alternativeName>
    <alternativeName>
        <fullName evidence="1">DCD-DUT</fullName>
    </alternativeName>
</protein>
<accession>B8ZTC3</accession>
<comment type="function">
    <text evidence="1">Bifunctional enzyme that catalyzes both the deamination of dCTP to dUTP and the hydrolysis of dUTP to dUMP without releasing the toxic dUTP intermediate.</text>
</comment>
<comment type="catalytic activity">
    <reaction evidence="1">
        <text>dCTP + 2 H2O = dUMP + NH4(+) + diphosphate</text>
        <dbReference type="Rhea" id="RHEA:19205"/>
        <dbReference type="ChEBI" id="CHEBI:15377"/>
        <dbReference type="ChEBI" id="CHEBI:28938"/>
        <dbReference type="ChEBI" id="CHEBI:33019"/>
        <dbReference type="ChEBI" id="CHEBI:61481"/>
        <dbReference type="ChEBI" id="CHEBI:246422"/>
        <dbReference type="EC" id="3.5.4.30"/>
    </reaction>
</comment>
<comment type="pathway">
    <text evidence="1">Pyrimidine metabolism; dUMP biosynthesis; dUMP from dCTP: step 1/1.</text>
</comment>
<comment type="subunit">
    <text evidence="1">Homotrimer.</text>
</comment>
<comment type="similarity">
    <text evidence="1">Belongs to the dCTP deaminase family.</text>
</comment>
<keyword id="KW-0378">Hydrolase</keyword>
<keyword id="KW-0546">Nucleotide metabolism</keyword>
<keyword id="KW-0547">Nucleotide-binding</keyword>
<reference key="1">
    <citation type="journal article" date="2009" name="Nat. Genet.">
        <title>Comparative genomic and phylogeographic analysis of Mycobacterium leprae.</title>
        <authorList>
            <person name="Monot M."/>
            <person name="Honore N."/>
            <person name="Garnier T."/>
            <person name="Zidane N."/>
            <person name="Sherafi D."/>
            <person name="Paniz-Mondolfi A."/>
            <person name="Matsuoka M."/>
            <person name="Taylor G.M."/>
            <person name="Donoghue H.D."/>
            <person name="Bouwman A."/>
            <person name="Mays S."/>
            <person name="Watson C."/>
            <person name="Lockwood D."/>
            <person name="Khamispour A."/>
            <person name="Dowlati Y."/>
            <person name="Jianping S."/>
            <person name="Rea T.H."/>
            <person name="Vera-Cabrera L."/>
            <person name="Stefani M.M."/>
            <person name="Banu S."/>
            <person name="Macdonald M."/>
            <person name="Sapkota B.R."/>
            <person name="Spencer J.S."/>
            <person name="Thomas J."/>
            <person name="Harshman K."/>
            <person name="Singh P."/>
            <person name="Busso P."/>
            <person name="Gattiker A."/>
            <person name="Rougemont J."/>
            <person name="Brennan P.J."/>
            <person name="Cole S.T."/>
        </authorList>
    </citation>
    <scope>NUCLEOTIDE SEQUENCE [LARGE SCALE GENOMIC DNA]</scope>
    <source>
        <strain>Br4923</strain>
    </source>
</reference>
<dbReference type="EC" id="3.5.4.30" evidence="1"/>
<dbReference type="EMBL" id="FM211192">
    <property type="protein sequence ID" value="CAR72606.1"/>
    <property type="molecule type" value="Genomic_DNA"/>
</dbReference>
<dbReference type="SMR" id="B8ZTC3"/>
<dbReference type="KEGG" id="mlb:MLBr02507"/>
<dbReference type="HOGENOM" id="CLU_087476_2_1_11"/>
<dbReference type="UniPathway" id="UPA00610">
    <property type="reaction ID" value="UER00667"/>
</dbReference>
<dbReference type="Proteomes" id="UP000006900">
    <property type="component" value="Chromosome"/>
</dbReference>
<dbReference type="GO" id="GO:0033973">
    <property type="term" value="F:dCTP deaminase (dUMP-forming) activity"/>
    <property type="evidence" value="ECO:0007669"/>
    <property type="project" value="UniProtKB-UniRule"/>
</dbReference>
<dbReference type="GO" id="GO:0008829">
    <property type="term" value="F:dCTP deaminase activity"/>
    <property type="evidence" value="ECO:0007669"/>
    <property type="project" value="InterPro"/>
</dbReference>
<dbReference type="GO" id="GO:0000166">
    <property type="term" value="F:nucleotide binding"/>
    <property type="evidence" value="ECO:0007669"/>
    <property type="project" value="UniProtKB-KW"/>
</dbReference>
<dbReference type="GO" id="GO:0006226">
    <property type="term" value="P:dUMP biosynthetic process"/>
    <property type="evidence" value="ECO:0007669"/>
    <property type="project" value="UniProtKB-UniRule"/>
</dbReference>
<dbReference type="GO" id="GO:0006229">
    <property type="term" value="P:dUTP biosynthetic process"/>
    <property type="evidence" value="ECO:0007669"/>
    <property type="project" value="InterPro"/>
</dbReference>
<dbReference type="GO" id="GO:0015949">
    <property type="term" value="P:nucleobase-containing small molecule interconversion"/>
    <property type="evidence" value="ECO:0007669"/>
    <property type="project" value="TreeGrafter"/>
</dbReference>
<dbReference type="CDD" id="cd07557">
    <property type="entry name" value="trimeric_dUTPase"/>
    <property type="match status" value="1"/>
</dbReference>
<dbReference type="FunFam" id="2.70.40.10:FF:000005">
    <property type="entry name" value="dCTP deaminase, dUMP-forming"/>
    <property type="match status" value="1"/>
</dbReference>
<dbReference type="Gene3D" id="2.70.40.10">
    <property type="match status" value="1"/>
</dbReference>
<dbReference type="HAMAP" id="MF_00146">
    <property type="entry name" value="dCTP_deaminase"/>
    <property type="match status" value="1"/>
</dbReference>
<dbReference type="InterPro" id="IPR011962">
    <property type="entry name" value="dCTP_deaminase"/>
</dbReference>
<dbReference type="InterPro" id="IPR036157">
    <property type="entry name" value="dUTPase-like_sf"/>
</dbReference>
<dbReference type="InterPro" id="IPR033704">
    <property type="entry name" value="dUTPase_trimeric"/>
</dbReference>
<dbReference type="NCBIfam" id="TIGR02274">
    <property type="entry name" value="dCTP_deam"/>
    <property type="match status" value="1"/>
</dbReference>
<dbReference type="PANTHER" id="PTHR42680">
    <property type="entry name" value="DCTP DEAMINASE"/>
    <property type="match status" value="1"/>
</dbReference>
<dbReference type="PANTHER" id="PTHR42680:SF3">
    <property type="entry name" value="DCTP DEAMINASE"/>
    <property type="match status" value="1"/>
</dbReference>
<dbReference type="Pfam" id="PF22769">
    <property type="entry name" value="DCD"/>
    <property type="match status" value="1"/>
</dbReference>
<dbReference type="SUPFAM" id="SSF51283">
    <property type="entry name" value="dUTPase-like"/>
    <property type="match status" value="1"/>
</dbReference>
<evidence type="ECO:0000255" key="1">
    <source>
        <dbReference type="HAMAP-Rule" id="MF_00146"/>
    </source>
</evidence>
<evidence type="ECO:0000256" key="2">
    <source>
        <dbReference type="SAM" id="MobiDB-lite"/>
    </source>
</evidence>
<gene>
    <name evidence="1" type="primary">dcd</name>
    <name type="ordered locus">MLBr02507</name>
</gene>
<sequence>MLLSDRDLRAEITAGRFSIDPFDDTLVQPSSIDVRLDCMFRVFNNTRYTHIDPARQQDELTSLVELVDGEPFVLHPGGFVLGSTLELFTLPEDLAGRLEGKSSLGRLGLLTHSTAGFIDPGFCGHITLELSNVANLPITLWPGMKIGQLCVLRLTSPAEHPYGSASAGSKYQGQRGPTPSRSYENFIKNT</sequence>
<organism>
    <name type="scientific">Mycobacterium leprae (strain Br4923)</name>
    <dbReference type="NCBI Taxonomy" id="561304"/>
    <lineage>
        <taxon>Bacteria</taxon>
        <taxon>Bacillati</taxon>
        <taxon>Actinomycetota</taxon>
        <taxon>Actinomycetes</taxon>
        <taxon>Mycobacteriales</taxon>
        <taxon>Mycobacteriaceae</taxon>
        <taxon>Mycobacterium</taxon>
    </lineage>
</organism>
<name>DCDB_MYCLB</name>
<proteinExistence type="inferred from homology"/>
<feature type="chain" id="PRO_1000123153" description="dCTP deaminase, dUMP-forming">
    <location>
        <begin position="1"/>
        <end position="190"/>
    </location>
</feature>
<feature type="region of interest" description="Disordered" evidence="2">
    <location>
        <begin position="162"/>
        <end position="190"/>
    </location>
</feature>
<feature type="compositionally biased region" description="Polar residues" evidence="2">
    <location>
        <begin position="166"/>
        <end position="190"/>
    </location>
</feature>
<feature type="active site" description="Proton donor/acceptor" evidence="1">
    <location>
        <position position="129"/>
    </location>
</feature>
<feature type="binding site" evidence="1">
    <location>
        <begin position="101"/>
        <end position="106"/>
    </location>
    <ligand>
        <name>dCTP</name>
        <dbReference type="ChEBI" id="CHEBI:61481"/>
    </ligand>
</feature>
<feature type="binding site" evidence="1">
    <location>
        <position position="119"/>
    </location>
    <ligand>
        <name>dCTP</name>
        <dbReference type="ChEBI" id="CHEBI:61481"/>
    </ligand>
</feature>
<feature type="binding site" evidence="1">
    <location>
        <begin position="127"/>
        <end position="129"/>
    </location>
    <ligand>
        <name>dCTP</name>
        <dbReference type="ChEBI" id="CHEBI:61481"/>
    </ligand>
</feature>
<feature type="binding site" evidence="1">
    <location>
        <position position="148"/>
    </location>
    <ligand>
        <name>dCTP</name>
        <dbReference type="ChEBI" id="CHEBI:61481"/>
    </ligand>
</feature>
<feature type="binding site" evidence="1">
    <location>
        <position position="162"/>
    </location>
    <ligand>
        <name>dCTP</name>
        <dbReference type="ChEBI" id="CHEBI:61481"/>
    </ligand>
</feature>
<feature type="binding site" evidence="1">
    <location>
        <position position="174"/>
    </location>
    <ligand>
        <name>dCTP</name>
        <dbReference type="ChEBI" id="CHEBI:61481"/>
    </ligand>
</feature>
<feature type="site" description="Important for bifunctional activity" evidence="1">
    <location>
        <begin position="116"/>
        <end position="117"/>
    </location>
</feature>